<dbReference type="EMBL" id="GU292918">
    <property type="protein sequence ID" value="ADB56734.1"/>
    <property type="molecule type" value="mRNA"/>
</dbReference>
<dbReference type="SMR" id="D2Y241"/>
<dbReference type="ArachnoServer" id="AS001657">
    <property type="toxin name" value="U3-theraphotoxin-Hhn1a"/>
</dbReference>
<dbReference type="GO" id="GO:0005576">
    <property type="term" value="C:extracellular region"/>
    <property type="evidence" value="ECO:0007669"/>
    <property type="project" value="UniProtKB-SubCell"/>
</dbReference>
<dbReference type="GO" id="GO:0008200">
    <property type="term" value="F:ion channel inhibitor activity"/>
    <property type="evidence" value="ECO:0007669"/>
    <property type="project" value="InterPro"/>
</dbReference>
<dbReference type="GO" id="GO:0090729">
    <property type="term" value="F:toxin activity"/>
    <property type="evidence" value="ECO:0007669"/>
    <property type="project" value="UniProtKB-KW"/>
</dbReference>
<dbReference type="InterPro" id="IPR011696">
    <property type="entry name" value="Huwentoxin-1"/>
</dbReference>
<dbReference type="InterPro" id="IPR013140">
    <property type="entry name" value="Huwentoxin_CS1"/>
</dbReference>
<dbReference type="Pfam" id="PF07740">
    <property type="entry name" value="Toxin_12"/>
    <property type="match status" value="1"/>
</dbReference>
<dbReference type="SUPFAM" id="SSF57059">
    <property type="entry name" value="omega toxin-like"/>
    <property type="match status" value="1"/>
</dbReference>
<dbReference type="PROSITE" id="PS60021">
    <property type="entry name" value="HWTX_1"/>
    <property type="match status" value="1"/>
</dbReference>
<reference key="1">
    <citation type="journal article" date="2010" name="J. Proteome Res.">
        <title>Molecular diversification of peptide toxins from the tarantula Haplopelma hainanum (Ornithoctonus hainana) venom based on transcriptomic, peptidomic, and genomic analyses.</title>
        <authorList>
            <person name="Tang X."/>
            <person name="Zhang Y."/>
            <person name="Hu W."/>
            <person name="Xu D."/>
            <person name="Tao H."/>
            <person name="Yang X."/>
            <person name="Li Y."/>
            <person name="Jiang L."/>
            <person name="Liang S."/>
        </authorList>
    </citation>
    <scope>NUCLEOTIDE SEQUENCE [LARGE SCALE MRNA]</scope>
    <scope>PROTEIN SEQUENCE OF 53-85</scope>
    <scope>IDENTIFICATION BY MASS SPECTROMETRY</scope>
    <source>
        <tissue>Venom</tissue>
        <tissue>Venom gland</tissue>
    </source>
</reference>
<name>H8A02_CYRHA</name>
<accession>D2Y241</accession>
<keyword id="KW-0903">Direct protein sequencing</keyword>
<keyword id="KW-1015">Disulfide bond</keyword>
<keyword id="KW-0872">Ion channel impairing toxin</keyword>
<keyword id="KW-0960">Knottin</keyword>
<keyword id="KW-0964">Secreted</keyword>
<keyword id="KW-0732">Signal</keyword>
<keyword id="KW-0800">Toxin</keyword>
<organism>
    <name type="scientific">Cyriopagopus hainanus</name>
    <name type="common">Chinese bird spider</name>
    <name type="synonym">Haplopelma hainanum</name>
    <dbReference type="NCBI Taxonomy" id="209901"/>
    <lineage>
        <taxon>Eukaryota</taxon>
        <taxon>Metazoa</taxon>
        <taxon>Ecdysozoa</taxon>
        <taxon>Arthropoda</taxon>
        <taxon>Chelicerata</taxon>
        <taxon>Arachnida</taxon>
        <taxon>Araneae</taxon>
        <taxon>Mygalomorphae</taxon>
        <taxon>Theraphosidae</taxon>
        <taxon>Haplopelma</taxon>
    </lineage>
</organism>
<proteinExistence type="evidence at protein level"/>
<sequence length="87" mass="10156">MVNMKASMFLTFAGLVLLFVVCYASESEEKEFPKEMLSSIFAVDDDFKQEERDCAGYMRECKEKLCCSGYVCSSRWKWCVLPAPWRR</sequence>
<protein>
    <recommendedName>
        <fullName>U3-theraphotoxin-Hhn1a 2</fullName>
        <shortName>U3-TRTX-Hhn1a</shortName>
    </recommendedName>
    <alternativeName>
        <fullName>Hainantoxin-VIII.2</fullName>
        <shortName>HNTX-VIII.2</shortName>
    </alternativeName>
    <alternativeName>
        <fullName>Peptide F4-27.90</fullName>
    </alternativeName>
</protein>
<comment type="function">
    <text evidence="1">Ion channel inhibitor.</text>
</comment>
<comment type="subcellular location">
    <subcellularLocation>
        <location>Secreted</location>
    </subcellularLocation>
</comment>
<comment type="tissue specificity">
    <text>Expressed by the venom gland.</text>
</comment>
<comment type="domain">
    <text evidence="1">The presence of a 'disulfide through disulfide knot' structurally defines this protein as a knottin.</text>
</comment>
<comment type="similarity">
    <text evidence="5">Belongs to the neurotoxin 10 (Hwtx-1) family. 51 (Hntx-8) subfamily. Hntx-8 sub-subfamily.</text>
</comment>
<evidence type="ECO:0000250" key="1"/>
<evidence type="ECO:0000250" key="2">
    <source>
        <dbReference type="UniProtKB" id="B3FIS6"/>
    </source>
</evidence>
<evidence type="ECO:0000255" key="3"/>
<evidence type="ECO:0000269" key="4">
    <source>
    </source>
</evidence>
<evidence type="ECO:0000305" key="5"/>
<feature type="signal peptide" evidence="3">
    <location>
        <begin position="1"/>
        <end position="24"/>
    </location>
</feature>
<feature type="propeptide" id="PRO_0000400581" evidence="4">
    <location>
        <begin position="25"/>
        <end position="52"/>
    </location>
</feature>
<feature type="peptide" id="PRO_0000400582" description="U3-theraphotoxin-Hhn1a 2">
    <location>
        <begin position="53"/>
        <end position="87"/>
    </location>
</feature>
<feature type="disulfide bond" evidence="2">
    <location>
        <begin position="54"/>
        <end position="67"/>
    </location>
</feature>
<feature type="disulfide bond" evidence="2">
    <location>
        <begin position="61"/>
        <end position="72"/>
    </location>
</feature>
<feature type="disulfide bond" evidence="2">
    <location>
        <begin position="66"/>
        <end position="79"/>
    </location>
</feature>